<sequence length="459" mass="51372">MDLDTITSISTPMGEGAIGIVRLSGPQAVEIADKLYKGKHLLNDVPSHTINYGHIIDPESKEVVEEVMVSVLRAPKTFTREDIIEINCHGGILTINRVLELTMTYGARMAEPGEFTKRAFLNGRIDLSQAEAVMDFIRSKTDRASKVAMNQIEGRLSDLIKKQRQSILEILAQVEVNIDYPEYDDVEDATTEFLLEQSKEIKQEINRLLDTGAQGKIMREGLSTVIVGKPNVGKSSMLNNLIQDNKAIVTEVAGTTRDVLEEYVNVRSVPLRLVDTAGIRETEDIVEKIGVERSRKALSQADLILFVLNNNEALTQEDYTLYEVVKNEDVIVIVNKMDLEQNIDINEVKDMIGDTPLIQTSMLKQEGIDELEIQIRDLFFGGEVQNQDMTYVSNSRHISLLKQARQTIQDAIDAAESGVPMDMVQIDLTRTWEILGEIIGETASDELIDQLFSQFCLGK</sequence>
<comment type="function">
    <text evidence="1">Exhibits a very high intrinsic GTPase hydrolysis rate. Involved in the addition of a carboxymethylaminomethyl (cmnm) group at the wobble position (U34) of certain tRNAs, forming tRNA-cmnm(5)s(2)U34.</text>
</comment>
<comment type="cofactor">
    <cofactor evidence="1">
        <name>K(+)</name>
        <dbReference type="ChEBI" id="CHEBI:29103"/>
    </cofactor>
    <text evidence="1">Binds 1 potassium ion per subunit.</text>
</comment>
<comment type="subunit">
    <text evidence="1">Homodimer. Heterotetramer of two MnmE and two MnmG subunits.</text>
</comment>
<comment type="subcellular location">
    <subcellularLocation>
        <location evidence="1">Cytoplasm</location>
    </subcellularLocation>
</comment>
<comment type="similarity">
    <text evidence="1">Belongs to the TRAFAC class TrmE-Era-EngA-EngB-Septin-like GTPase superfamily. TrmE GTPase family.</text>
</comment>
<accession>A7X7A8</accession>
<feature type="chain" id="PRO_1000048881" description="tRNA modification GTPase MnmE">
    <location>
        <begin position="1"/>
        <end position="459"/>
    </location>
</feature>
<feature type="domain" description="TrmE-type G">
    <location>
        <begin position="221"/>
        <end position="380"/>
    </location>
</feature>
<feature type="binding site" evidence="1">
    <location>
        <position position="22"/>
    </location>
    <ligand>
        <name>(6S)-5-formyl-5,6,7,8-tetrahydrofolate</name>
        <dbReference type="ChEBI" id="CHEBI:57457"/>
    </ligand>
</feature>
<feature type="binding site" evidence="1">
    <location>
        <position position="85"/>
    </location>
    <ligand>
        <name>(6S)-5-formyl-5,6,7,8-tetrahydrofolate</name>
        <dbReference type="ChEBI" id="CHEBI:57457"/>
    </ligand>
</feature>
<feature type="binding site" evidence="1">
    <location>
        <position position="124"/>
    </location>
    <ligand>
        <name>(6S)-5-formyl-5,6,7,8-tetrahydrofolate</name>
        <dbReference type="ChEBI" id="CHEBI:57457"/>
    </ligand>
</feature>
<feature type="binding site" evidence="1">
    <location>
        <begin position="231"/>
        <end position="236"/>
    </location>
    <ligand>
        <name>GTP</name>
        <dbReference type="ChEBI" id="CHEBI:37565"/>
    </ligand>
</feature>
<feature type="binding site" evidence="1">
    <location>
        <position position="231"/>
    </location>
    <ligand>
        <name>K(+)</name>
        <dbReference type="ChEBI" id="CHEBI:29103"/>
    </ligand>
</feature>
<feature type="binding site" evidence="1">
    <location>
        <position position="235"/>
    </location>
    <ligand>
        <name>Mg(2+)</name>
        <dbReference type="ChEBI" id="CHEBI:18420"/>
    </ligand>
</feature>
<feature type="binding site" evidence="1">
    <location>
        <begin position="250"/>
        <end position="256"/>
    </location>
    <ligand>
        <name>GTP</name>
        <dbReference type="ChEBI" id="CHEBI:37565"/>
    </ligand>
</feature>
<feature type="binding site" evidence="1">
    <location>
        <position position="250"/>
    </location>
    <ligand>
        <name>K(+)</name>
        <dbReference type="ChEBI" id="CHEBI:29103"/>
    </ligand>
</feature>
<feature type="binding site" evidence="1">
    <location>
        <position position="252"/>
    </location>
    <ligand>
        <name>K(+)</name>
        <dbReference type="ChEBI" id="CHEBI:29103"/>
    </ligand>
</feature>
<feature type="binding site" evidence="1">
    <location>
        <position position="255"/>
    </location>
    <ligand>
        <name>K(+)</name>
        <dbReference type="ChEBI" id="CHEBI:29103"/>
    </ligand>
</feature>
<feature type="binding site" evidence="1">
    <location>
        <position position="256"/>
    </location>
    <ligand>
        <name>Mg(2+)</name>
        <dbReference type="ChEBI" id="CHEBI:18420"/>
    </ligand>
</feature>
<feature type="binding site" evidence="1">
    <location>
        <begin position="275"/>
        <end position="278"/>
    </location>
    <ligand>
        <name>GTP</name>
        <dbReference type="ChEBI" id="CHEBI:37565"/>
    </ligand>
</feature>
<feature type="binding site" evidence="1">
    <location>
        <position position="459"/>
    </location>
    <ligand>
        <name>(6S)-5-formyl-5,6,7,8-tetrahydrofolate</name>
        <dbReference type="ChEBI" id="CHEBI:57457"/>
    </ligand>
</feature>
<gene>
    <name evidence="1" type="primary">mnmE</name>
    <name evidence="1" type="synonym">trmE</name>
    <name type="ordered locus">SAHV_2696</name>
</gene>
<organism>
    <name type="scientific">Staphylococcus aureus (strain Mu3 / ATCC 700698)</name>
    <dbReference type="NCBI Taxonomy" id="418127"/>
    <lineage>
        <taxon>Bacteria</taxon>
        <taxon>Bacillati</taxon>
        <taxon>Bacillota</taxon>
        <taxon>Bacilli</taxon>
        <taxon>Bacillales</taxon>
        <taxon>Staphylococcaceae</taxon>
        <taxon>Staphylococcus</taxon>
    </lineage>
</organism>
<name>MNME_STAA1</name>
<protein>
    <recommendedName>
        <fullName evidence="1">tRNA modification GTPase MnmE</fullName>
        <ecNumber evidence="1">3.6.-.-</ecNumber>
    </recommendedName>
</protein>
<reference key="1">
    <citation type="journal article" date="2008" name="Antimicrob. Agents Chemother.">
        <title>Mutated response regulator graR is responsible for phenotypic conversion of Staphylococcus aureus from heterogeneous vancomycin-intermediate resistance to vancomycin-intermediate resistance.</title>
        <authorList>
            <person name="Neoh H.-M."/>
            <person name="Cui L."/>
            <person name="Yuzawa H."/>
            <person name="Takeuchi F."/>
            <person name="Matsuo M."/>
            <person name="Hiramatsu K."/>
        </authorList>
    </citation>
    <scope>NUCLEOTIDE SEQUENCE [LARGE SCALE GENOMIC DNA]</scope>
    <source>
        <strain>Mu3 / ATCC 700698</strain>
    </source>
</reference>
<dbReference type="EC" id="3.6.-.-" evidence="1"/>
<dbReference type="EMBL" id="AP009324">
    <property type="protein sequence ID" value="BAF79579.1"/>
    <property type="molecule type" value="Genomic_DNA"/>
</dbReference>
<dbReference type="RefSeq" id="WP_000362511.1">
    <property type="nucleotide sequence ID" value="NC_009782.1"/>
</dbReference>
<dbReference type="SMR" id="A7X7A8"/>
<dbReference type="KEGG" id="saw:SAHV_2696"/>
<dbReference type="HOGENOM" id="CLU_019624_4_1_9"/>
<dbReference type="GO" id="GO:0005829">
    <property type="term" value="C:cytosol"/>
    <property type="evidence" value="ECO:0007669"/>
    <property type="project" value="TreeGrafter"/>
</dbReference>
<dbReference type="GO" id="GO:0005525">
    <property type="term" value="F:GTP binding"/>
    <property type="evidence" value="ECO:0007669"/>
    <property type="project" value="UniProtKB-UniRule"/>
</dbReference>
<dbReference type="GO" id="GO:0003924">
    <property type="term" value="F:GTPase activity"/>
    <property type="evidence" value="ECO:0007669"/>
    <property type="project" value="UniProtKB-UniRule"/>
</dbReference>
<dbReference type="GO" id="GO:0046872">
    <property type="term" value="F:metal ion binding"/>
    <property type="evidence" value="ECO:0007669"/>
    <property type="project" value="UniProtKB-KW"/>
</dbReference>
<dbReference type="GO" id="GO:0030488">
    <property type="term" value="P:tRNA methylation"/>
    <property type="evidence" value="ECO:0007669"/>
    <property type="project" value="TreeGrafter"/>
</dbReference>
<dbReference type="GO" id="GO:0002098">
    <property type="term" value="P:tRNA wobble uridine modification"/>
    <property type="evidence" value="ECO:0007669"/>
    <property type="project" value="TreeGrafter"/>
</dbReference>
<dbReference type="CDD" id="cd04164">
    <property type="entry name" value="trmE"/>
    <property type="match status" value="1"/>
</dbReference>
<dbReference type="CDD" id="cd14858">
    <property type="entry name" value="TrmE_N"/>
    <property type="match status" value="1"/>
</dbReference>
<dbReference type="FunFam" id="3.30.1360.120:FF:000003">
    <property type="entry name" value="tRNA modification GTPase MnmE"/>
    <property type="match status" value="1"/>
</dbReference>
<dbReference type="FunFam" id="3.40.50.300:FF:000494">
    <property type="entry name" value="tRNA modification GTPase MnmE"/>
    <property type="match status" value="1"/>
</dbReference>
<dbReference type="Gene3D" id="3.40.50.300">
    <property type="entry name" value="P-loop containing nucleotide triphosphate hydrolases"/>
    <property type="match status" value="1"/>
</dbReference>
<dbReference type="Gene3D" id="3.30.1360.120">
    <property type="entry name" value="Probable tRNA modification gtpase trme, domain 1"/>
    <property type="match status" value="1"/>
</dbReference>
<dbReference type="Gene3D" id="1.20.120.430">
    <property type="entry name" value="tRNA modification GTPase MnmE domain 2"/>
    <property type="match status" value="1"/>
</dbReference>
<dbReference type="HAMAP" id="MF_00379">
    <property type="entry name" value="GTPase_MnmE"/>
    <property type="match status" value="1"/>
</dbReference>
<dbReference type="InterPro" id="IPR031168">
    <property type="entry name" value="G_TrmE"/>
</dbReference>
<dbReference type="InterPro" id="IPR006073">
    <property type="entry name" value="GTP-bd"/>
</dbReference>
<dbReference type="InterPro" id="IPR018948">
    <property type="entry name" value="GTP-bd_TrmE_N"/>
</dbReference>
<dbReference type="InterPro" id="IPR004520">
    <property type="entry name" value="GTPase_MnmE"/>
</dbReference>
<dbReference type="InterPro" id="IPR027368">
    <property type="entry name" value="MnmE_dom2"/>
</dbReference>
<dbReference type="InterPro" id="IPR025867">
    <property type="entry name" value="MnmE_helical"/>
</dbReference>
<dbReference type="InterPro" id="IPR027417">
    <property type="entry name" value="P-loop_NTPase"/>
</dbReference>
<dbReference type="InterPro" id="IPR005225">
    <property type="entry name" value="Small_GTP-bd"/>
</dbReference>
<dbReference type="InterPro" id="IPR027266">
    <property type="entry name" value="TrmE/GcvT_dom1"/>
</dbReference>
<dbReference type="NCBIfam" id="TIGR00450">
    <property type="entry name" value="mnmE_trmE_thdF"/>
    <property type="match status" value="1"/>
</dbReference>
<dbReference type="NCBIfam" id="NF003661">
    <property type="entry name" value="PRK05291.1-3"/>
    <property type="match status" value="1"/>
</dbReference>
<dbReference type="NCBIfam" id="TIGR00231">
    <property type="entry name" value="small_GTP"/>
    <property type="match status" value="1"/>
</dbReference>
<dbReference type="PANTHER" id="PTHR42714">
    <property type="entry name" value="TRNA MODIFICATION GTPASE GTPBP3"/>
    <property type="match status" value="1"/>
</dbReference>
<dbReference type="PANTHER" id="PTHR42714:SF2">
    <property type="entry name" value="TRNA MODIFICATION GTPASE GTPBP3, MITOCHONDRIAL"/>
    <property type="match status" value="1"/>
</dbReference>
<dbReference type="Pfam" id="PF01926">
    <property type="entry name" value="MMR_HSR1"/>
    <property type="match status" value="1"/>
</dbReference>
<dbReference type="Pfam" id="PF12631">
    <property type="entry name" value="MnmE_helical"/>
    <property type="match status" value="1"/>
</dbReference>
<dbReference type="Pfam" id="PF10396">
    <property type="entry name" value="TrmE_N"/>
    <property type="match status" value="1"/>
</dbReference>
<dbReference type="PRINTS" id="PR00449">
    <property type="entry name" value="RASTRNSFRMNG"/>
</dbReference>
<dbReference type="SUPFAM" id="SSF52540">
    <property type="entry name" value="P-loop containing nucleoside triphosphate hydrolases"/>
    <property type="match status" value="1"/>
</dbReference>
<dbReference type="SUPFAM" id="SSF116878">
    <property type="entry name" value="TrmE connector domain"/>
    <property type="match status" value="1"/>
</dbReference>
<dbReference type="PROSITE" id="PS51709">
    <property type="entry name" value="G_TRME"/>
    <property type="match status" value="1"/>
</dbReference>
<proteinExistence type="inferred from homology"/>
<keyword id="KW-0963">Cytoplasm</keyword>
<keyword id="KW-0342">GTP-binding</keyword>
<keyword id="KW-0378">Hydrolase</keyword>
<keyword id="KW-0460">Magnesium</keyword>
<keyword id="KW-0479">Metal-binding</keyword>
<keyword id="KW-0547">Nucleotide-binding</keyword>
<keyword id="KW-0630">Potassium</keyword>
<keyword id="KW-0819">tRNA processing</keyword>
<evidence type="ECO:0000255" key="1">
    <source>
        <dbReference type="HAMAP-Rule" id="MF_00379"/>
    </source>
</evidence>